<organism>
    <name type="scientific">Bacillus cereus (strain 03BB102)</name>
    <dbReference type="NCBI Taxonomy" id="572264"/>
    <lineage>
        <taxon>Bacteria</taxon>
        <taxon>Bacillati</taxon>
        <taxon>Bacillota</taxon>
        <taxon>Bacilli</taxon>
        <taxon>Bacillales</taxon>
        <taxon>Bacillaceae</taxon>
        <taxon>Bacillus</taxon>
        <taxon>Bacillus cereus group</taxon>
    </lineage>
</organism>
<feature type="chain" id="PRO_1000185062" description="Metallothiol transferase FosB">
    <location>
        <begin position="1"/>
        <end position="138"/>
    </location>
</feature>
<feature type="domain" description="VOC" evidence="2">
    <location>
        <begin position="4"/>
        <end position="119"/>
    </location>
</feature>
<feature type="active site" description="Proton donor/acceptor" evidence="2">
    <location>
        <position position="115"/>
    </location>
</feature>
<feature type="binding site" evidence="1">
    <location>
        <position position="7"/>
    </location>
    <ligand>
        <name>Mg(2+)</name>
        <dbReference type="ChEBI" id="CHEBI:18420"/>
    </ligand>
</feature>
<feature type="binding site" evidence="1">
    <location>
        <position position="66"/>
    </location>
    <ligand>
        <name>Mg(2+)</name>
        <dbReference type="ChEBI" id="CHEBI:18420"/>
    </ligand>
</feature>
<feature type="binding site" evidence="1">
    <location>
        <position position="115"/>
    </location>
    <ligand>
        <name>Mg(2+)</name>
        <dbReference type="ChEBI" id="CHEBI:18420"/>
    </ligand>
</feature>
<evidence type="ECO:0000255" key="1">
    <source>
        <dbReference type="HAMAP-Rule" id="MF_01512"/>
    </source>
</evidence>
<evidence type="ECO:0000255" key="2">
    <source>
        <dbReference type="PROSITE-ProRule" id="PRU01163"/>
    </source>
</evidence>
<keyword id="KW-0046">Antibiotic resistance</keyword>
<keyword id="KW-0963">Cytoplasm</keyword>
<keyword id="KW-0460">Magnesium</keyword>
<keyword id="KW-0479">Metal-binding</keyword>
<keyword id="KW-0808">Transferase</keyword>
<protein>
    <recommendedName>
        <fullName evidence="1">Metallothiol transferase FosB</fullName>
        <ecNumber evidence="1">2.5.1.-</ecNumber>
    </recommendedName>
    <alternativeName>
        <fullName evidence="1">Fosfomycin resistance protein</fullName>
    </alternativeName>
</protein>
<comment type="function">
    <text evidence="1">Metallothiol transferase which confers resistance to fosfomycin by catalyzing the addition of a thiol cofactor to fosfomycin. L-cysteine is probably the physiological thiol donor.</text>
</comment>
<comment type="cofactor">
    <cofactor evidence="1">
        <name>Mg(2+)</name>
        <dbReference type="ChEBI" id="CHEBI:18420"/>
    </cofactor>
</comment>
<comment type="subunit">
    <text evidence="1">Homodimer.</text>
</comment>
<comment type="subcellular location">
    <subcellularLocation>
        <location evidence="1">Cytoplasm</location>
    </subcellularLocation>
</comment>
<comment type="similarity">
    <text evidence="1">Belongs to the fosfomycin resistance protein family. FosB subfamily.</text>
</comment>
<proteinExistence type="inferred from homology"/>
<sequence length="138" mass="16524">MLKGINHLCFSVSNLEDSITFYEKVLEGELLVRGRKLAYFNICGVWIALNEEIHIPRNEIHQSYTHIAFSVEQKDFERLLQRLEENDVHILQGRERDVRDCESIYFVDPDGHKFEFHSGTLQERLNYYREDKPHMTFY</sequence>
<reference key="1">
    <citation type="submission" date="2009-02" db="EMBL/GenBank/DDBJ databases">
        <title>Genome sequence of Bacillus cereus 03BB102.</title>
        <authorList>
            <person name="Dodson R.J."/>
            <person name="Jackson P."/>
            <person name="Munk A.C."/>
            <person name="Brettin T."/>
            <person name="Bruce D."/>
            <person name="Detter C."/>
            <person name="Tapia R."/>
            <person name="Han C."/>
            <person name="Sutton G."/>
            <person name="Sims D."/>
        </authorList>
    </citation>
    <scope>NUCLEOTIDE SEQUENCE [LARGE SCALE GENOMIC DNA]</scope>
    <source>
        <strain>03BB102</strain>
    </source>
</reference>
<gene>
    <name evidence="1" type="primary">fosB</name>
    <name type="ordered locus">BCA_2114</name>
</gene>
<dbReference type="EC" id="2.5.1.-" evidence="1"/>
<dbReference type="EMBL" id="CP001407">
    <property type="protein sequence ID" value="ACO26078.1"/>
    <property type="molecule type" value="Genomic_DNA"/>
</dbReference>
<dbReference type="RefSeq" id="WP_000911694.1">
    <property type="nucleotide sequence ID" value="NZ_CP009318.1"/>
</dbReference>
<dbReference type="SMR" id="C1ERH6"/>
<dbReference type="KEGG" id="bcx:BCA_2114"/>
<dbReference type="PATRIC" id="fig|572264.18.peg.2060"/>
<dbReference type="Proteomes" id="UP000002210">
    <property type="component" value="Chromosome"/>
</dbReference>
<dbReference type="GO" id="GO:0005737">
    <property type="term" value="C:cytoplasm"/>
    <property type="evidence" value="ECO:0007669"/>
    <property type="project" value="UniProtKB-SubCell"/>
</dbReference>
<dbReference type="GO" id="GO:0000287">
    <property type="term" value="F:magnesium ion binding"/>
    <property type="evidence" value="ECO:0007669"/>
    <property type="project" value="UniProtKB-UniRule"/>
</dbReference>
<dbReference type="GO" id="GO:0016765">
    <property type="term" value="F:transferase activity, transferring alkyl or aryl (other than methyl) groups"/>
    <property type="evidence" value="ECO:0007669"/>
    <property type="project" value="UniProtKB-UniRule"/>
</dbReference>
<dbReference type="GO" id="GO:0046677">
    <property type="term" value="P:response to antibiotic"/>
    <property type="evidence" value="ECO:0007669"/>
    <property type="project" value="UniProtKB-UniRule"/>
</dbReference>
<dbReference type="FunFam" id="3.10.180.10:FF:000015">
    <property type="entry name" value="Metallothiol transferase FosB"/>
    <property type="match status" value="1"/>
</dbReference>
<dbReference type="Gene3D" id="3.10.180.10">
    <property type="entry name" value="2,3-Dihydroxybiphenyl 1,2-Dioxygenase, domain 1"/>
    <property type="match status" value="1"/>
</dbReference>
<dbReference type="HAMAP" id="MF_01512">
    <property type="entry name" value="FosB"/>
    <property type="match status" value="1"/>
</dbReference>
<dbReference type="InterPro" id="IPR051332">
    <property type="entry name" value="Fosfomycin_Res_Enzymes"/>
</dbReference>
<dbReference type="InterPro" id="IPR029068">
    <property type="entry name" value="Glyas_Bleomycin-R_OHBP_Dase"/>
</dbReference>
<dbReference type="InterPro" id="IPR004360">
    <property type="entry name" value="Glyas_Fos-R_dOase_dom"/>
</dbReference>
<dbReference type="InterPro" id="IPR022858">
    <property type="entry name" value="Metallothiol_Trafse_FosB"/>
</dbReference>
<dbReference type="InterPro" id="IPR037523">
    <property type="entry name" value="VOC"/>
</dbReference>
<dbReference type="NCBIfam" id="NF000493">
    <property type="entry name" value="Fos_BSH"/>
    <property type="match status" value="1"/>
</dbReference>
<dbReference type="NCBIfam" id="NF041541">
    <property type="entry name" value="fosBx1_fam"/>
    <property type="match status" value="1"/>
</dbReference>
<dbReference type="NCBIfam" id="NF003152">
    <property type="entry name" value="PRK04101.1"/>
    <property type="match status" value="1"/>
</dbReference>
<dbReference type="PANTHER" id="PTHR36113:SF6">
    <property type="entry name" value="FOSFOMYCIN RESISTANCE PROTEIN FOSX"/>
    <property type="match status" value="1"/>
</dbReference>
<dbReference type="PANTHER" id="PTHR36113">
    <property type="entry name" value="LYASE, PUTATIVE-RELATED-RELATED"/>
    <property type="match status" value="1"/>
</dbReference>
<dbReference type="Pfam" id="PF00903">
    <property type="entry name" value="Glyoxalase"/>
    <property type="match status" value="1"/>
</dbReference>
<dbReference type="SUPFAM" id="SSF54593">
    <property type="entry name" value="Glyoxalase/Bleomycin resistance protein/Dihydroxybiphenyl dioxygenase"/>
    <property type="match status" value="1"/>
</dbReference>
<dbReference type="PROSITE" id="PS51819">
    <property type="entry name" value="VOC"/>
    <property type="match status" value="1"/>
</dbReference>
<accession>C1ERH6</accession>
<name>FOSB_BACC3</name>